<proteinExistence type="inferred from homology"/>
<name>MENG_BACHK</name>
<organism>
    <name type="scientific">Bacillus thuringiensis subsp. konkukian (strain 97-27)</name>
    <dbReference type="NCBI Taxonomy" id="281309"/>
    <lineage>
        <taxon>Bacteria</taxon>
        <taxon>Bacillati</taxon>
        <taxon>Bacillota</taxon>
        <taxon>Bacilli</taxon>
        <taxon>Bacillales</taxon>
        <taxon>Bacillaceae</taxon>
        <taxon>Bacillus</taxon>
        <taxon>Bacillus cereus group</taxon>
    </lineage>
</organism>
<keyword id="KW-0474">Menaquinone biosynthesis</keyword>
<keyword id="KW-0489">Methyltransferase</keyword>
<keyword id="KW-0949">S-adenosyl-L-methionine</keyword>
<keyword id="KW-0808">Transferase</keyword>
<feature type="chain" id="PRO_0000193243" description="Demethylmenaquinone methyltransferase">
    <location>
        <begin position="1"/>
        <end position="237"/>
    </location>
</feature>
<feature type="binding site" evidence="1">
    <location>
        <position position="58"/>
    </location>
    <ligand>
        <name>S-adenosyl-L-methionine</name>
        <dbReference type="ChEBI" id="CHEBI:59789"/>
    </ligand>
</feature>
<feature type="binding site" evidence="1">
    <location>
        <position position="79"/>
    </location>
    <ligand>
        <name>S-adenosyl-L-methionine</name>
        <dbReference type="ChEBI" id="CHEBI:59789"/>
    </ligand>
</feature>
<feature type="binding site" evidence="1">
    <location>
        <begin position="106"/>
        <end position="107"/>
    </location>
    <ligand>
        <name>S-adenosyl-L-methionine</name>
        <dbReference type="ChEBI" id="CHEBI:59789"/>
    </ligand>
</feature>
<sequence>MQQSKEERVHDVFEKISDKYDVMNSVISFQRHKAWRKETMRIMDVKPGSKALDVCCGTADWTIALAGAVGEQGKVVGLDFSENMLSVGKQKVEALQLKQVELLHGNAMELPFEDNTFDYVTIGFGLRNVPDYMHVLKEMTRVVKPGGKVICLETSQPTMIGFRQGYILYFKYIMPLFGKLFAKSYKEYSWLQESASTFPGMKELANMFEKAGLERVQVKPFTFGVAAMHLGMKPESK</sequence>
<dbReference type="EC" id="2.1.1.163" evidence="1"/>
<dbReference type="EMBL" id="AE017355">
    <property type="protein sequence ID" value="AAT63222.1"/>
    <property type="molecule type" value="Genomic_DNA"/>
</dbReference>
<dbReference type="RefSeq" id="WP_001187667.1">
    <property type="nucleotide sequence ID" value="NC_005957.1"/>
</dbReference>
<dbReference type="RefSeq" id="YP_035729.1">
    <property type="nucleotide sequence ID" value="NC_005957.1"/>
</dbReference>
<dbReference type="SMR" id="Q6HL42"/>
<dbReference type="GeneID" id="75084824"/>
<dbReference type="KEGG" id="btk:BT9727_1395"/>
<dbReference type="PATRIC" id="fig|281309.8.peg.1467"/>
<dbReference type="HOGENOM" id="CLU_037990_0_0_9"/>
<dbReference type="UniPathway" id="UPA00079">
    <property type="reaction ID" value="UER00169"/>
</dbReference>
<dbReference type="Proteomes" id="UP000001301">
    <property type="component" value="Chromosome"/>
</dbReference>
<dbReference type="GO" id="GO:0043770">
    <property type="term" value="F:demethylmenaquinone methyltransferase activity"/>
    <property type="evidence" value="ECO:0007669"/>
    <property type="project" value="UniProtKB-UniRule"/>
</dbReference>
<dbReference type="GO" id="GO:0009234">
    <property type="term" value="P:menaquinone biosynthetic process"/>
    <property type="evidence" value="ECO:0007669"/>
    <property type="project" value="UniProtKB-UniRule"/>
</dbReference>
<dbReference type="GO" id="GO:0032259">
    <property type="term" value="P:methylation"/>
    <property type="evidence" value="ECO:0007669"/>
    <property type="project" value="UniProtKB-KW"/>
</dbReference>
<dbReference type="CDD" id="cd02440">
    <property type="entry name" value="AdoMet_MTases"/>
    <property type="match status" value="1"/>
</dbReference>
<dbReference type="FunFam" id="3.40.50.150:FF:000086">
    <property type="entry name" value="Demethylmenaquinone methyltransferase"/>
    <property type="match status" value="1"/>
</dbReference>
<dbReference type="Gene3D" id="3.40.50.150">
    <property type="entry name" value="Vaccinia Virus protein VP39"/>
    <property type="match status" value="1"/>
</dbReference>
<dbReference type="HAMAP" id="MF_01813">
    <property type="entry name" value="MenG_UbiE_methyltr"/>
    <property type="match status" value="1"/>
</dbReference>
<dbReference type="InterPro" id="IPR014122">
    <property type="entry name" value="MenG_heptapren"/>
</dbReference>
<dbReference type="InterPro" id="IPR029063">
    <property type="entry name" value="SAM-dependent_MTases_sf"/>
</dbReference>
<dbReference type="InterPro" id="IPR004033">
    <property type="entry name" value="UbiE/COQ5_MeTrFase"/>
</dbReference>
<dbReference type="InterPro" id="IPR023576">
    <property type="entry name" value="UbiE/COQ5_MeTrFase_CS"/>
</dbReference>
<dbReference type="NCBIfam" id="TIGR02752">
    <property type="entry name" value="MenG_heptapren"/>
    <property type="match status" value="1"/>
</dbReference>
<dbReference type="NCBIfam" id="TIGR01934">
    <property type="entry name" value="MenG_MenH_UbiE"/>
    <property type="match status" value="1"/>
</dbReference>
<dbReference type="NCBIfam" id="NF001243">
    <property type="entry name" value="PRK00216.1-4"/>
    <property type="match status" value="1"/>
</dbReference>
<dbReference type="NCBIfam" id="NF001244">
    <property type="entry name" value="PRK00216.1-5"/>
    <property type="match status" value="1"/>
</dbReference>
<dbReference type="PANTHER" id="PTHR43591:SF24">
    <property type="entry name" value="2-METHOXY-6-POLYPRENYL-1,4-BENZOQUINOL METHYLASE, MITOCHONDRIAL"/>
    <property type="match status" value="1"/>
</dbReference>
<dbReference type="PANTHER" id="PTHR43591">
    <property type="entry name" value="METHYLTRANSFERASE"/>
    <property type="match status" value="1"/>
</dbReference>
<dbReference type="Pfam" id="PF01209">
    <property type="entry name" value="Ubie_methyltran"/>
    <property type="match status" value="1"/>
</dbReference>
<dbReference type="SUPFAM" id="SSF53335">
    <property type="entry name" value="S-adenosyl-L-methionine-dependent methyltransferases"/>
    <property type="match status" value="1"/>
</dbReference>
<dbReference type="PROSITE" id="PS51608">
    <property type="entry name" value="SAM_MT_UBIE"/>
    <property type="match status" value="1"/>
</dbReference>
<dbReference type="PROSITE" id="PS01183">
    <property type="entry name" value="UBIE_1"/>
    <property type="match status" value="1"/>
</dbReference>
<dbReference type="PROSITE" id="PS01184">
    <property type="entry name" value="UBIE_2"/>
    <property type="match status" value="1"/>
</dbReference>
<evidence type="ECO:0000255" key="1">
    <source>
        <dbReference type="HAMAP-Rule" id="MF_01813"/>
    </source>
</evidence>
<reference key="1">
    <citation type="journal article" date="2006" name="J. Bacteriol.">
        <title>Pathogenomic sequence analysis of Bacillus cereus and Bacillus thuringiensis isolates closely related to Bacillus anthracis.</title>
        <authorList>
            <person name="Han C.S."/>
            <person name="Xie G."/>
            <person name="Challacombe J.F."/>
            <person name="Altherr M.R."/>
            <person name="Bhotika S.S."/>
            <person name="Bruce D."/>
            <person name="Campbell C.S."/>
            <person name="Campbell M.L."/>
            <person name="Chen J."/>
            <person name="Chertkov O."/>
            <person name="Cleland C."/>
            <person name="Dimitrijevic M."/>
            <person name="Doggett N.A."/>
            <person name="Fawcett J.J."/>
            <person name="Glavina T."/>
            <person name="Goodwin L.A."/>
            <person name="Hill K.K."/>
            <person name="Hitchcock P."/>
            <person name="Jackson P.J."/>
            <person name="Keim P."/>
            <person name="Kewalramani A.R."/>
            <person name="Longmire J."/>
            <person name="Lucas S."/>
            <person name="Malfatti S."/>
            <person name="McMurry K."/>
            <person name="Meincke L.J."/>
            <person name="Misra M."/>
            <person name="Moseman B.L."/>
            <person name="Mundt M."/>
            <person name="Munk A.C."/>
            <person name="Okinaka R.T."/>
            <person name="Parson-Quintana B."/>
            <person name="Reilly L.P."/>
            <person name="Richardson P."/>
            <person name="Robinson D.L."/>
            <person name="Rubin E."/>
            <person name="Saunders E."/>
            <person name="Tapia R."/>
            <person name="Tesmer J.G."/>
            <person name="Thayer N."/>
            <person name="Thompson L.S."/>
            <person name="Tice H."/>
            <person name="Ticknor L.O."/>
            <person name="Wills P.L."/>
            <person name="Brettin T.S."/>
            <person name="Gilna P."/>
        </authorList>
    </citation>
    <scope>NUCLEOTIDE SEQUENCE [LARGE SCALE GENOMIC DNA]</scope>
    <source>
        <strain>97-27</strain>
    </source>
</reference>
<protein>
    <recommendedName>
        <fullName evidence="1">Demethylmenaquinone methyltransferase</fullName>
        <ecNumber evidence="1">2.1.1.163</ecNumber>
    </recommendedName>
</protein>
<accession>Q6HL42</accession>
<gene>
    <name evidence="1" type="primary">menG</name>
    <name type="ordered locus">BT9727_1395</name>
</gene>
<comment type="function">
    <text evidence="1">Methyltransferase required for the conversion of demethylmenaquinol (DMKH2) to menaquinol (MKH2).</text>
</comment>
<comment type="catalytic activity">
    <reaction evidence="1">
        <text>a 2-demethylmenaquinol + S-adenosyl-L-methionine = a menaquinol + S-adenosyl-L-homocysteine + H(+)</text>
        <dbReference type="Rhea" id="RHEA:42640"/>
        <dbReference type="Rhea" id="RHEA-COMP:9539"/>
        <dbReference type="Rhea" id="RHEA-COMP:9563"/>
        <dbReference type="ChEBI" id="CHEBI:15378"/>
        <dbReference type="ChEBI" id="CHEBI:18151"/>
        <dbReference type="ChEBI" id="CHEBI:55437"/>
        <dbReference type="ChEBI" id="CHEBI:57856"/>
        <dbReference type="ChEBI" id="CHEBI:59789"/>
        <dbReference type="EC" id="2.1.1.163"/>
    </reaction>
</comment>
<comment type="pathway">
    <text evidence="1">Quinol/quinone metabolism; menaquinone biosynthesis; menaquinol from 1,4-dihydroxy-2-naphthoate: step 2/2.</text>
</comment>
<comment type="similarity">
    <text evidence="1">Belongs to the class I-like SAM-binding methyltransferase superfamily. MenG/UbiE family.</text>
</comment>